<comment type="function">
    <text evidence="1">Involved in biosynthesis of the thiamine precursor thiazole. Catalyzes the conversion of NAD and glycine to adenosine diphosphate 5-(2-hydroxyethyl)-4-methylthiazole-2-carboxylic acid (ADT), an adenylated thiazole intermediate. The reaction includes an iron-dependent sulfide transfer from a conserved cysteine residue of the protein to a thiazole intermediate. The enzyme can only undergo a single turnover, which suggests it is a suicide enzyme. May have additional roles in adaptation to various stress conditions and in DNA damage tolerance.</text>
</comment>
<comment type="catalytic activity">
    <reaction evidence="1">
        <text>[ADP-thiazole synthase]-L-cysteine + glycine + NAD(+) = [ADP-thiazole synthase]-dehydroalanine + ADP-5-ethyl-4-methylthiazole-2-carboxylate + nicotinamide + 3 H2O + 2 H(+)</text>
        <dbReference type="Rhea" id="RHEA:55708"/>
        <dbReference type="Rhea" id="RHEA-COMP:14264"/>
        <dbReference type="Rhea" id="RHEA-COMP:14265"/>
        <dbReference type="ChEBI" id="CHEBI:15377"/>
        <dbReference type="ChEBI" id="CHEBI:15378"/>
        <dbReference type="ChEBI" id="CHEBI:17154"/>
        <dbReference type="ChEBI" id="CHEBI:29950"/>
        <dbReference type="ChEBI" id="CHEBI:57305"/>
        <dbReference type="ChEBI" id="CHEBI:57540"/>
        <dbReference type="ChEBI" id="CHEBI:90873"/>
        <dbReference type="ChEBI" id="CHEBI:139151"/>
        <dbReference type="EC" id="2.4.2.60"/>
    </reaction>
</comment>
<comment type="cofactor">
    <cofactor evidence="1">
        <name>Fe cation</name>
        <dbReference type="ChEBI" id="CHEBI:24875"/>
    </cofactor>
    <text evidence="1">Binds 1 Fe cation per subunit.</text>
</comment>
<comment type="subunit">
    <text evidence="1">Homooctamer.</text>
</comment>
<comment type="subcellular location">
    <subcellularLocation>
        <location evidence="1">Plastid</location>
        <location evidence="1">Chloroplast</location>
    </subcellularLocation>
</comment>
<comment type="PTM">
    <text evidence="1">During the catalytic reaction, a sulfide is transferred from Cys-219 to a reaction intermediate, generating a dehydroalanine residue.</text>
</comment>
<comment type="similarity">
    <text evidence="1">Belongs to the THI4 family.</text>
</comment>
<reference key="1">
    <citation type="journal article" date="2007" name="Nature">
        <title>The grapevine genome sequence suggests ancestral hexaploidization in major angiosperm phyla.</title>
        <authorList>
            <person name="Jaillon O."/>
            <person name="Aury J.-M."/>
            <person name="Noel B."/>
            <person name="Policriti A."/>
            <person name="Clepet C."/>
            <person name="Casagrande A."/>
            <person name="Choisne N."/>
            <person name="Aubourg S."/>
            <person name="Vitulo N."/>
            <person name="Jubin C."/>
            <person name="Vezzi A."/>
            <person name="Legeai F."/>
            <person name="Hugueney P."/>
            <person name="Dasilva C."/>
            <person name="Horner D."/>
            <person name="Mica E."/>
            <person name="Jublot D."/>
            <person name="Poulain J."/>
            <person name="Bruyere C."/>
            <person name="Billault A."/>
            <person name="Segurens B."/>
            <person name="Gouyvenoux M."/>
            <person name="Ugarte E."/>
            <person name="Cattonaro F."/>
            <person name="Anthouard V."/>
            <person name="Vico V."/>
            <person name="Del Fabbro C."/>
            <person name="Alaux M."/>
            <person name="Di Gaspero G."/>
            <person name="Dumas V."/>
            <person name="Felice N."/>
            <person name="Paillard S."/>
            <person name="Juman I."/>
            <person name="Moroldo M."/>
            <person name="Scalabrin S."/>
            <person name="Canaguier A."/>
            <person name="Le Clainche I."/>
            <person name="Malacrida G."/>
            <person name="Durand E."/>
            <person name="Pesole G."/>
            <person name="Laucou V."/>
            <person name="Chatelet P."/>
            <person name="Merdinoglu D."/>
            <person name="Delledonne M."/>
            <person name="Pezzotti M."/>
            <person name="Lecharny A."/>
            <person name="Scarpelli C."/>
            <person name="Artiguenave F."/>
            <person name="Pe M.E."/>
            <person name="Valle G."/>
            <person name="Morgante M."/>
            <person name="Caboche M."/>
            <person name="Adam-Blondon A.-F."/>
            <person name="Weissenbach J."/>
            <person name="Quetier F."/>
            <person name="Wincker P."/>
        </authorList>
    </citation>
    <scope>NUCLEOTIDE SEQUENCE [LARGE SCALE GENOMIC DNA]</scope>
    <source>
        <strain>cv. Pinot noir / PN40024</strain>
    </source>
</reference>
<keyword id="KW-0150">Chloroplast</keyword>
<keyword id="KW-0408">Iron</keyword>
<keyword id="KW-0479">Metal-binding</keyword>
<keyword id="KW-0520">NAD</keyword>
<keyword id="KW-0934">Plastid</keyword>
<keyword id="KW-1185">Reference proteome</keyword>
<keyword id="KW-0784">Thiamine biosynthesis</keyword>
<keyword id="KW-0808">Transferase</keyword>
<keyword id="KW-0809">Transit peptide</keyword>
<feature type="transit peptide" description="Chloroplast" evidence="1">
    <location>
        <begin position="1"/>
        <end position="48"/>
    </location>
</feature>
<feature type="chain" id="PRO_0000415867" description="Thiamine thiazole synthase 1, chloroplastic">
    <location>
        <begin position="49"/>
        <end position="353"/>
    </location>
</feature>
<feature type="binding site" evidence="1">
    <location>
        <position position="97"/>
    </location>
    <ligand>
        <name>substrate</name>
    </ligand>
</feature>
<feature type="binding site" evidence="1">
    <location>
        <begin position="117"/>
        <end position="118"/>
    </location>
    <ligand>
        <name>substrate</name>
    </ligand>
</feature>
<feature type="binding site" evidence="1">
    <location>
        <position position="125"/>
    </location>
    <ligand>
        <name>substrate</name>
    </ligand>
</feature>
<feature type="binding site" evidence="1">
    <location>
        <position position="190"/>
    </location>
    <ligand>
        <name>substrate</name>
    </ligand>
</feature>
<feature type="binding site" evidence="1">
    <location>
        <position position="221"/>
    </location>
    <ligand>
        <name>substrate</name>
    </ligand>
</feature>
<feature type="binding site" evidence="1">
    <location>
        <position position="236"/>
    </location>
    <ligand>
        <name>substrate</name>
    </ligand>
</feature>
<feature type="binding site" evidence="1">
    <location>
        <position position="288"/>
    </location>
    <ligand>
        <name>substrate</name>
    </ligand>
</feature>
<feature type="binding site" evidence="1">
    <location>
        <begin position="298"/>
        <end position="300"/>
    </location>
    <ligand>
        <name>substrate</name>
    </ligand>
</feature>
<feature type="modified residue" description="2,3-didehydroalanine (Cys)" evidence="1">
    <location>
        <position position="219"/>
    </location>
</feature>
<protein>
    <recommendedName>
        <fullName evidence="1">Thiamine thiazole synthase 1, chloroplastic</fullName>
        <ecNumber evidence="1">2.4.2.60</ecNumber>
    </recommendedName>
    <alternativeName>
        <fullName evidence="1">Thiazole biosynthetic enzyme 1</fullName>
    </alternativeName>
</protein>
<accession>F6H9A9</accession>
<sequence>MATLTSSICSKPKASVFDPHKSSFHGVPIATQARLSPVKSTPVNLAVTAAAMPYDLRSFKFEPIKESIVSREMTRRYMMDMITYADTDVVVVGAGSAGLSCAYELSKNPSVQVAIIEQSVSPGGGAWLGGQLFSSMVVRKPAHRFLDELGLEYDEQDNYVVIKHAALFTSTIMSKLLARPNVKLFNAVAAEDLIIKEGKVGGVVTNWALVSMNHDTQSCMDPNVMEAKVVVSSCGHDGPFGATGVKRLRSVGMIDSVPGMKALDMNTAEDEIVRLTREVVPGMIVTGMEVAEIDGSPRMGPTFGAMMISGQKAAHLALKSLGLPNALDGTYIGNLHPELVLAAAADAAEIAEA</sequence>
<dbReference type="EC" id="2.4.2.60" evidence="1"/>
<dbReference type="EMBL" id="FN595498">
    <property type="protein sequence ID" value="CCB48802.1"/>
    <property type="molecule type" value="Genomic_DNA"/>
</dbReference>
<dbReference type="EMBL" id="FN597046">
    <property type="status" value="NOT_ANNOTATED_CDS"/>
    <property type="molecule type" value="Genomic_DNA"/>
</dbReference>
<dbReference type="RefSeq" id="NP_001384750.1">
    <property type="nucleotide sequence ID" value="NM_001397821.1"/>
</dbReference>
<dbReference type="RefSeq" id="XP_002281769.1">
    <property type="nucleotide sequence ID" value="XM_002281733.3"/>
</dbReference>
<dbReference type="SMR" id="F6H9A9"/>
<dbReference type="FunCoup" id="F6H9A9">
    <property type="interactions" value="755"/>
</dbReference>
<dbReference type="STRING" id="29760.F6H9A9"/>
<dbReference type="PaxDb" id="29760-VIT_19s0177g00140.t01"/>
<dbReference type="EnsemblPlants" id="Vitvi19g00441_t001">
    <property type="protein sequence ID" value="Vitvi19g00441_P001"/>
    <property type="gene ID" value="Vitvi19g00441"/>
</dbReference>
<dbReference type="GeneID" id="100260728"/>
<dbReference type="Gramene" id="Vitvi19g00441_t001">
    <property type="protein sequence ID" value="Vitvi19g00441_P001"/>
    <property type="gene ID" value="Vitvi19g00441"/>
</dbReference>
<dbReference type="eggNOG" id="KOG2960">
    <property type="taxonomic scope" value="Eukaryota"/>
</dbReference>
<dbReference type="HOGENOM" id="CLU_053727_1_0_1"/>
<dbReference type="InParanoid" id="F6H9A9"/>
<dbReference type="OrthoDB" id="410463at2759"/>
<dbReference type="Proteomes" id="UP000009183">
    <property type="component" value="Chromosome 19"/>
</dbReference>
<dbReference type="GO" id="GO:0009570">
    <property type="term" value="C:chloroplast stroma"/>
    <property type="evidence" value="ECO:0007669"/>
    <property type="project" value="UniProtKB-UniRule"/>
</dbReference>
<dbReference type="GO" id="GO:0005829">
    <property type="term" value="C:cytosol"/>
    <property type="evidence" value="ECO:0007669"/>
    <property type="project" value="UniProtKB-UniRule"/>
</dbReference>
<dbReference type="GO" id="GO:0160205">
    <property type="term" value="F:cysteine-dependent adenosine diphosphate thiazole synthase activity"/>
    <property type="evidence" value="ECO:0007669"/>
    <property type="project" value="UniProtKB-EC"/>
</dbReference>
<dbReference type="GO" id="GO:0005506">
    <property type="term" value="F:iron ion binding"/>
    <property type="evidence" value="ECO:0000318"/>
    <property type="project" value="GO_Central"/>
</dbReference>
<dbReference type="GO" id="GO:0009228">
    <property type="term" value="P:thiamine biosynthetic process"/>
    <property type="evidence" value="ECO:0007669"/>
    <property type="project" value="UniProtKB-UniRule"/>
</dbReference>
<dbReference type="GO" id="GO:0052837">
    <property type="term" value="P:thiazole biosynthetic process"/>
    <property type="evidence" value="ECO:0000318"/>
    <property type="project" value="GO_Central"/>
</dbReference>
<dbReference type="FunFam" id="3.50.50.60:FF:000070">
    <property type="entry name" value="Thiamine thiazole synthase, chloroplastic"/>
    <property type="match status" value="1"/>
</dbReference>
<dbReference type="Gene3D" id="6.10.250.2840">
    <property type="match status" value="1"/>
</dbReference>
<dbReference type="Gene3D" id="3.50.50.60">
    <property type="entry name" value="FAD/NAD(P)-binding domain"/>
    <property type="match status" value="1"/>
</dbReference>
<dbReference type="HAMAP" id="MF_03158">
    <property type="entry name" value="THI4"/>
    <property type="match status" value="1"/>
</dbReference>
<dbReference type="InterPro" id="IPR036188">
    <property type="entry name" value="FAD/NAD-bd_sf"/>
</dbReference>
<dbReference type="InterPro" id="IPR027495">
    <property type="entry name" value="Sti35"/>
</dbReference>
<dbReference type="InterPro" id="IPR002922">
    <property type="entry name" value="Thi4_fam"/>
</dbReference>
<dbReference type="NCBIfam" id="TIGR00292">
    <property type="entry name" value="sulfide-dependent adenosine diphosphate thiazole synthase"/>
    <property type="match status" value="1"/>
</dbReference>
<dbReference type="PANTHER" id="PTHR43422">
    <property type="entry name" value="THIAMINE THIAZOLE SYNTHASE"/>
    <property type="match status" value="1"/>
</dbReference>
<dbReference type="PANTHER" id="PTHR43422:SF3">
    <property type="entry name" value="THIAMINE THIAZOLE SYNTHASE"/>
    <property type="match status" value="1"/>
</dbReference>
<dbReference type="Pfam" id="PF01946">
    <property type="entry name" value="Thi4"/>
    <property type="match status" value="1"/>
</dbReference>
<dbReference type="SUPFAM" id="SSF51905">
    <property type="entry name" value="FAD/NAD(P)-binding domain"/>
    <property type="match status" value="1"/>
</dbReference>
<evidence type="ECO:0000255" key="1">
    <source>
        <dbReference type="HAMAP-Rule" id="MF_03158"/>
    </source>
</evidence>
<organism>
    <name type="scientific">Vitis vinifera</name>
    <name type="common">Grape</name>
    <dbReference type="NCBI Taxonomy" id="29760"/>
    <lineage>
        <taxon>Eukaryota</taxon>
        <taxon>Viridiplantae</taxon>
        <taxon>Streptophyta</taxon>
        <taxon>Embryophyta</taxon>
        <taxon>Tracheophyta</taxon>
        <taxon>Spermatophyta</taxon>
        <taxon>Magnoliopsida</taxon>
        <taxon>eudicotyledons</taxon>
        <taxon>Gunneridae</taxon>
        <taxon>Pentapetalae</taxon>
        <taxon>rosids</taxon>
        <taxon>Vitales</taxon>
        <taxon>Vitaceae</taxon>
        <taxon>Viteae</taxon>
        <taxon>Vitis</taxon>
    </lineage>
</organism>
<name>THI41_VITVI</name>
<proteinExistence type="inferred from homology"/>
<gene>
    <name evidence="1" type="primary">THI1-1</name>
    <name type="ordered locus">VIT_19s0177g00140</name>
</gene>